<reference key="1">
    <citation type="journal article" date="2018" name="Arch. Biochem. Biophys.">
        <title>Molecular cloning and functional characterization of three terpene synthases from unripe fruit of black pepper (Piper nigrum).</title>
        <authorList>
            <person name="Jin Z."/>
            <person name="Kwon M."/>
            <person name="Lee A.-R."/>
            <person name="Ro D.-K."/>
            <person name="Wungsintaweekul J."/>
            <person name="Kim S.-U."/>
        </authorList>
    </citation>
    <scope>NUCLEOTIDE SEQUENCE [MRNA]</scope>
    <scope>FUNCTION</scope>
    <scope>CATALYTIC ACTIVITY</scope>
    <scope>PATHWAY</scope>
    <scope>BIOPHYSICOCHEMICAL PROPERTIES</scope>
    <scope>TISSUE SPECIFICITY</scope>
</reference>
<accession>A0A1V0E4A6</accession>
<proteinExistence type="evidence at protein level"/>
<evidence type="ECO:0000250" key="1">
    <source>
        <dbReference type="UniProtKB" id="A0A1C9J6A7"/>
    </source>
</evidence>
<evidence type="ECO:0000250" key="2">
    <source>
        <dbReference type="UniProtKB" id="Q40577"/>
    </source>
</evidence>
<evidence type="ECO:0000269" key="3">
    <source>
    </source>
</evidence>
<evidence type="ECO:0000303" key="4">
    <source>
    </source>
</evidence>
<evidence type="ECO:0000305" key="5"/>
<keyword id="KW-0456">Lyase</keyword>
<keyword id="KW-0460">Magnesium</keyword>
<keyword id="KW-0479">Metal-binding</keyword>
<organism>
    <name type="scientific">Piper nigrum</name>
    <name type="common">Black pepper</name>
    <dbReference type="NCBI Taxonomy" id="13216"/>
    <lineage>
        <taxon>Eukaryota</taxon>
        <taxon>Viridiplantae</taxon>
        <taxon>Streptophyta</taxon>
        <taxon>Embryophyta</taxon>
        <taxon>Tracheophyta</taxon>
        <taxon>Spermatophyta</taxon>
        <taxon>Magnoliopsida</taxon>
        <taxon>Magnoliidae</taxon>
        <taxon>Piperales</taxon>
        <taxon>Piperaceae</taxon>
        <taxon>Piper</taxon>
    </lineage>
</organism>
<sequence>MDAVSCAINALSAQAPPKHLGGNNVGRKSVTFPKDIWGDYFLKISPNEEKLDSWRVRAKELKEKVFDILSCAKGAEQVHIIDALYHLGVSYQFEKEIEEALKNMLTTYNDDTSTEDDLYTLALRFRLLRQNGFHASTKALNKFKDAHGSFREDLASDVMGLLSLYEASYAGTVDDLILDEALAFTKIHLKAALPHLDSHLAQRVSHSLELPLHKRIQRLEAREFISLCEKDDSIVIKELLEFAKLDYNILQALHQWELKELTKWWKKLNLVGKMTFARDRMTEIYFYVSGFFFEPQYSRGRIISSKILAICSVVDDEYDVYGTLDELQVFTDAICRLDVAAMENLPEYVKPLYEAIFFSLKEFEEELAREGNAYRVNYLREEVKNLCKSYLQETKWLHQRYIPTLEEYLLVSEISSTYTVIFNGCFVGCGEIATKEVFEWFQAFPKLLSDSARIGRIADDIMSCKFEQSRGHCPSAVECCMEEHQCTKEVALGNLDGVLGRAWKDMNKACMRPTPFPMEVLRPIVNLARMAEISYQYEDGYTFSGGKTKERISMLYKDPIPV</sequence>
<feature type="chain" id="PRO_0000454952" description="Terpene synthase 2">
    <location>
        <begin position="1"/>
        <end position="562"/>
    </location>
</feature>
<feature type="short sequence motif" description="DDXXD motif" evidence="1">
    <location>
        <begin position="315"/>
        <end position="319"/>
    </location>
</feature>
<feature type="binding site" evidence="2">
    <location>
        <position position="315"/>
    </location>
    <ligand>
        <name>Mg(2+)</name>
        <dbReference type="ChEBI" id="CHEBI:18420"/>
        <label>1</label>
    </ligand>
</feature>
<feature type="binding site" evidence="2">
    <location>
        <position position="315"/>
    </location>
    <ligand>
        <name>Mg(2+)</name>
        <dbReference type="ChEBI" id="CHEBI:18420"/>
        <label>2</label>
    </ligand>
</feature>
<feature type="binding site" evidence="2">
    <location>
        <position position="319"/>
    </location>
    <ligand>
        <name>Mg(2+)</name>
        <dbReference type="ChEBI" id="CHEBI:18420"/>
        <label>1</label>
    </ligand>
</feature>
<feature type="binding site" evidence="2">
    <location>
        <position position="319"/>
    </location>
    <ligand>
        <name>Mg(2+)</name>
        <dbReference type="ChEBI" id="CHEBI:18420"/>
        <label>2</label>
    </ligand>
</feature>
<feature type="binding site" evidence="2">
    <location>
        <position position="459"/>
    </location>
    <ligand>
        <name>Mg(2+)</name>
        <dbReference type="ChEBI" id="CHEBI:18420"/>
        <label>3</label>
    </ligand>
</feature>
<feature type="binding site" evidence="2">
    <location>
        <position position="467"/>
    </location>
    <ligand>
        <name>Mg(2+)</name>
        <dbReference type="ChEBI" id="CHEBI:18420"/>
        <label>3</label>
    </ligand>
</feature>
<dbReference type="EC" id="4.2.3.-" evidence="3"/>
<dbReference type="EMBL" id="KU953958">
    <property type="protein sequence ID" value="ARB08606.1"/>
    <property type="molecule type" value="mRNA"/>
</dbReference>
<dbReference type="SMR" id="A0A1V0E4A6"/>
<dbReference type="BRENDA" id="4.2.3.13">
    <property type="organism ID" value="4863"/>
</dbReference>
<dbReference type="UniPathway" id="UPA00213"/>
<dbReference type="GO" id="GO:0047461">
    <property type="term" value="F:(+)-delta-cadinene synthase activity"/>
    <property type="evidence" value="ECO:0000314"/>
    <property type="project" value="UniProtKB"/>
</dbReference>
<dbReference type="GO" id="GO:0000287">
    <property type="term" value="F:magnesium ion binding"/>
    <property type="evidence" value="ECO:0007669"/>
    <property type="project" value="InterPro"/>
</dbReference>
<dbReference type="GO" id="GO:0010333">
    <property type="term" value="F:terpene synthase activity"/>
    <property type="evidence" value="ECO:0000314"/>
    <property type="project" value="UniProtKB"/>
</dbReference>
<dbReference type="GO" id="GO:1901928">
    <property type="term" value="P:cadinene biosynthetic process"/>
    <property type="evidence" value="ECO:0000314"/>
    <property type="project" value="UniProtKB"/>
</dbReference>
<dbReference type="GO" id="GO:0016102">
    <property type="term" value="P:diterpenoid biosynthetic process"/>
    <property type="evidence" value="ECO:0007669"/>
    <property type="project" value="InterPro"/>
</dbReference>
<dbReference type="GO" id="GO:0010597">
    <property type="term" value="P:green leaf volatile biosynthetic process"/>
    <property type="evidence" value="ECO:0000314"/>
    <property type="project" value="UniProtKB"/>
</dbReference>
<dbReference type="GO" id="GO:0051762">
    <property type="term" value="P:sesquiterpene biosynthetic process"/>
    <property type="evidence" value="ECO:0000314"/>
    <property type="project" value="UniProtKB"/>
</dbReference>
<dbReference type="CDD" id="cd00684">
    <property type="entry name" value="Terpene_cyclase_plant_C1"/>
    <property type="match status" value="1"/>
</dbReference>
<dbReference type="FunFam" id="1.10.600.10:FF:000007">
    <property type="entry name" value="Isoprene synthase, chloroplastic"/>
    <property type="match status" value="1"/>
</dbReference>
<dbReference type="FunFam" id="1.50.10.130:FF:000001">
    <property type="entry name" value="Isoprene synthase, chloroplastic"/>
    <property type="match status" value="1"/>
</dbReference>
<dbReference type="Gene3D" id="1.10.600.10">
    <property type="entry name" value="Farnesyl Diphosphate Synthase"/>
    <property type="match status" value="1"/>
</dbReference>
<dbReference type="Gene3D" id="1.50.10.130">
    <property type="entry name" value="Terpene synthase, N-terminal domain"/>
    <property type="match status" value="1"/>
</dbReference>
<dbReference type="InterPro" id="IPR008949">
    <property type="entry name" value="Isoprenoid_synthase_dom_sf"/>
</dbReference>
<dbReference type="InterPro" id="IPR034741">
    <property type="entry name" value="Terpene_cyclase-like_1_C"/>
</dbReference>
<dbReference type="InterPro" id="IPR044814">
    <property type="entry name" value="Terpene_cyclase_plant_C1"/>
</dbReference>
<dbReference type="InterPro" id="IPR001906">
    <property type="entry name" value="Terpene_synth_N"/>
</dbReference>
<dbReference type="InterPro" id="IPR036965">
    <property type="entry name" value="Terpene_synth_N_sf"/>
</dbReference>
<dbReference type="InterPro" id="IPR050148">
    <property type="entry name" value="Terpene_synthase-like"/>
</dbReference>
<dbReference type="InterPro" id="IPR005630">
    <property type="entry name" value="Terpene_synthase_metal-bd"/>
</dbReference>
<dbReference type="InterPro" id="IPR008930">
    <property type="entry name" value="Terpenoid_cyclase/PrenylTrfase"/>
</dbReference>
<dbReference type="PANTHER" id="PTHR31225:SF93">
    <property type="entry name" value="ALPHA-HUMULENE_(-)-(E)-BETA-CARYOPHYLLENE SYNTHASE"/>
    <property type="match status" value="1"/>
</dbReference>
<dbReference type="PANTHER" id="PTHR31225">
    <property type="entry name" value="OS04G0344100 PROTEIN-RELATED"/>
    <property type="match status" value="1"/>
</dbReference>
<dbReference type="Pfam" id="PF01397">
    <property type="entry name" value="Terpene_synth"/>
    <property type="match status" value="1"/>
</dbReference>
<dbReference type="Pfam" id="PF03936">
    <property type="entry name" value="Terpene_synth_C"/>
    <property type="match status" value="1"/>
</dbReference>
<dbReference type="SFLD" id="SFLDS00005">
    <property type="entry name" value="Isoprenoid_Synthase_Type_I"/>
    <property type="match status" value="1"/>
</dbReference>
<dbReference type="SFLD" id="SFLDG01019">
    <property type="entry name" value="Terpene_Cyclase_Like_1_C_Termi"/>
    <property type="match status" value="1"/>
</dbReference>
<dbReference type="SUPFAM" id="SSF48239">
    <property type="entry name" value="Terpenoid cyclases/Protein prenyltransferases"/>
    <property type="match status" value="1"/>
</dbReference>
<dbReference type="SUPFAM" id="SSF48576">
    <property type="entry name" value="Terpenoid synthases"/>
    <property type="match status" value="1"/>
</dbReference>
<gene>
    <name evidence="4" type="primary">TPS2</name>
</gene>
<name>TPS2_PIPNI</name>
<comment type="function">
    <text evidence="3">Sesquiterpene synthase involved in the biosynthesis of volatile compounds that contribute to the characteristic flavors of black pepper (PubMed:29248443). Mediates the conversion of (2E,6E)-farnesyl diphosphate (FPP) into alpha-cadinene, delta-cadinene and delta-cadinol (PubMed:29248443).</text>
</comment>
<comment type="catalytic activity">
    <reaction evidence="3">
        <text>(2E,6E)-farnesyl diphosphate = delta-cadinene + diphosphate</text>
        <dbReference type="Rhea" id="RHEA:56556"/>
        <dbReference type="ChEBI" id="CHEBI:33019"/>
        <dbReference type="ChEBI" id="CHEBI:140564"/>
        <dbReference type="ChEBI" id="CHEBI:175763"/>
    </reaction>
    <physiologicalReaction direction="left-to-right" evidence="3">
        <dbReference type="Rhea" id="RHEA:56557"/>
    </physiologicalReaction>
</comment>
<comment type="catalytic activity">
    <reaction evidence="3">
        <text>(2E,6E)-farnesyl diphosphate = alpha-cadinene + diphosphate</text>
        <dbReference type="Rhea" id="RHEA:69444"/>
        <dbReference type="ChEBI" id="CHEBI:33019"/>
        <dbReference type="ChEBI" id="CHEBI:80749"/>
        <dbReference type="ChEBI" id="CHEBI:175763"/>
    </reaction>
    <physiologicalReaction direction="left-to-right" evidence="3">
        <dbReference type="Rhea" id="RHEA:69445"/>
    </physiologicalReaction>
</comment>
<comment type="catalytic activity">
    <reaction evidence="3">
        <text>(2E,6E)-farnesyl diphosphate + H2O = (-)-delta-cadinol + diphosphate</text>
        <dbReference type="Rhea" id="RHEA:69448"/>
        <dbReference type="ChEBI" id="CHEBI:15377"/>
        <dbReference type="ChEBI" id="CHEBI:33019"/>
        <dbReference type="ChEBI" id="CHEBI:156223"/>
        <dbReference type="ChEBI" id="CHEBI:175763"/>
    </reaction>
    <physiologicalReaction direction="left-to-right" evidence="3">
        <dbReference type="Rhea" id="RHEA:69449"/>
    </physiologicalReaction>
</comment>
<comment type="cofactor">
    <cofactor evidence="1">
        <name>Mg(2+)</name>
        <dbReference type="ChEBI" id="CHEBI:18420"/>
    </cofactor>
    <cofactor evidence="1">
        <name>Mn(2+)</name>
        <dbReference type="ChEBI" id="CHEBI:29035"/>
    </cofactor>
    <text evidence="1">Binds 3 Mg(2+) or Mn(2+) ions per subunit.</text>
</comment>
<comment type="biophysicochemical properties">
    <kinetics>
        <KM evidence="3">18.4 uM for (2E,6E)-farnesyl diphosphate</KM>
        <text evidence="3">kcat is 0.694 sec(-1) with (2E,6E)-farnesyl diphosphate as substrate.</text>
    </kinetics>
</comment>
<comment type="pathway">
    <text evidence="3">Secondary metabolite biosynthesis; terpenoid biosynthesis.</text>
</comment>
<comment type="tissue specificity">
    <text evidence="3">Expressed at low levels in stems, leaves, roots and fruits.</text>
</comment>
<comment type="domain">
    <text evidence="2">The Asp-Asp-Xaa-Xaa-Asp/Glu (DDXXD/E) motif is important for the catalytic activity, presumably through binding to Mg(2+).</text>
</comment>
<comment type="similarity">
    <text evidence="5">Belongs to the terpene synthase family. Tpsa subfamily.</text>
</comment>
<protein>
    <recommendedName>
        <fullName evidence="4">Terpene synthase 2</fullName>
        <shortName evidence="4">PnTPS2</shortName>
    </recommendedName>
    <alternativeName>
        <fullName evidence="4">Cadinene synthase</fullName>
        <shortName evidence="4">PnCDS</shortName>
        <ecNumber evidence="3">4.2.3.-</ecNumber>
    </alternativeName>
    <alternativeName>
        <fullName evidence="4">Cadinol synthase</fullName>
        <shortName evidence="4">PnCO</shortName>
        <ecNumber evidence="3">4.2.3.-</ecNumber>
    </alternativeName>
</protein>